<evidence type="ECO:0000305" key="1"/>
<organism>
    <name type="scientific">Haemophilus influenzae (strain ATCC 51907 / DSM 11121 / KW20 / Rd)</name>
    <dbReference type="NCBI Taxonomy" id="71421"/>
    <lineage>
        <taxon>Bacteria</taxon>
        <taxon>Pseudomonadati</taxon>
        <taxon>Pseudomonadota</taxon>
        <taxon>Gammaproteobacteria</taxon>
        <taxon>Pasteurellales</taxon>
        <taxon>Pasteurellaceae</taxon>
        <taxon>Haemophilus</taxon>
    </lineage>
</organism>
<gene>
    <name type="ordered locus">HI_1522.1</name>
</gene>
<proteinExistence type="inferred from homology"/>
<keyword id="KW-1185">Reference proteome</keyword>
<sequence>MQSIKTIRCTFCNKLLAKVGTVGYLEIKCPRCKVINFTK</sequence>
<protein>
    <recommendedName>
        <fullName>Mu-like prophage FluMu protein com</fullName>
    </recommendedName>
</protein>
<reference key="1">
    <citation type="journal article" date="1995" name="Science">
        <title>Whole-genome random sequencing and assembly of Haemophilus influenzae Rd.</title>
        <authorList>
            <person name="Fleischmann R.D."/>
            <person name="Adams M.D."/>
            <person name="White O."/>
            <person name="Clayton R.A."/>
            <person name="Kirkness E.F."/>
            <person name="Kerlavage A.R."/>
            <person name="Bult C.J."/>
            <person name="Tomb J.-F."/>
            <person name="Dougherty B.A."/>
            <person name="Merrick J.M."/>
            <person name="McKenney K."/>
            <person name="Sutton G.G."/>
            <person name="FitzHugh W."/>
            <person name="Fields C.A."/>
            <person name="Gocayne J.D."/>
            <person name="Scott J.D."/>
            <person name="Shirley R."/>
            <person name="Liu L.-I."/>
            <person name="Glodek A."/>
            <person name="Kelley J.M."/>
            <person name="Weidman J.F."/>
            <person name="Phillips C.A."/>
            <person name="Spriggs T."/>
            <person name="Hedblom E."/>
            <person name="Cotton M.D."/>
            <person name="Utterback T.R."/>
            <person name="Hanna M.C."/>
            <person name="Nguyen D.T."/>
            <person name="Saudek D.M."/>
            <person name="Brandon R.C."/>
            <person name="Fine L.D."/>
            <person name="Fritchman J.L."/>
            <person name="Fuhrmann J.L."/>
            <person name="Geoghagen N.S.M."/>
            <person name="Gnehm C.L."/>
            <person name="McDonald L.A."/>
            <person name="Small K.V."/>
            <person name="Fraser C.M."/>
            <person name="Smith H.O."/>
            <person name="Venter J.C."/>
        </authorList>
    </citation>
    <scope>NUCLEOTIDE SEQUENCE [LARGE SCALE GENOMIC DNA]</scope>
    <source>
        <strain>ATCC 51907 / DSM 11121 / KW20 / Rd</strain>
    </source>
</reference>
<reference key="2">
    <citation type="submission" date="1996-09" db="EMBL/GenBank/DDBJ databases">
        <authorList>
            <person name="White O."/>
            <person name="Clayton R.A."/>
            <person name="Kerlavage A.R."/>
            <person name="Fleischmann R.D."/>
        </authorList>
    </citation>
    <scope>IDENTIFICATION</scope>
</reference>
<comment type="similarity">
    <text evidence="1">Belongs to the com family.</text>
</comment>
<accession>P71390</accession>
<name>VCOM_HAEIN</name>
<dbReference type="EMBL" id="L42023">
    <property type="protein sequence ID" value="AAC23179.1"/>
    <property type="molecule type" value="Genomic_DNA"/>
</dbReference>
<dbReference type="RefSeq" id="NP_439672.1">
    <property type="nucleotide sequence ID" value="NC_000907.1"/>
</dbReference>
<dbReference type="SMR" id="P71390"/>
<dbReference type="STRING" id="71421.HI_1522.1"/>
<dbReference type="EnsemblBacteria" id="AAC23179">
    <property type="protein sequence ID" value="AAC23179"/>
    <property type="gene ID" value="HI_1522.1"/>
</dbReference>
<dbReference type="KEGG" id="hin:HI_1522.1"/>
<dbReference type="eggNOG" id="COG4416">
    <property type="taxonomic scope" value="Bacteria"/>
</dbReference>
<dbReference type="HOGENOM" id="CLU_218677_0_0_6"/>
<dbReference type="OrthoDB" id="5460091at2"/>
<dbReference type="BioCyc" id="HINF71421:G1GJ1-1545-MONOMER"/>
<dbReference type="Proteomes" id="UP000000579">
    <property type="component" value="Chromosome"/>
</dbReference>
<dbReference type="InterPro" id="IPR019294">
    <property type="entry name" value="Translation_reg_Com"/>
</dbReference>
<dbReference type="Pfam" id="PF10122">
    <property type="entry name" value="Zn_ribbon_Com"/>
    <property type="match status" value="1"/>
</dbReference>
<feature type="chain" id="PRO_0000077660" description="Mu-like prophage FluMu protein com">
    <location>
        <begin position="1"/>
        <end position="39"/>
    </location>
</feature>